<keyword id="KW-0028">Amino-acid biosynthesis</keyword>
<keyword id="KW-0057">Aromatic amino acid biosynthesis</keyword>
<keyword id="KW-0521">NADP</keyword>
<keyword id="KW-0560">Oxidoreductase</keyword>
<protein>
    <recommendedName>
        <fullName evidence="1">Shikimate dehydrogenase (NADP(+))</fullName>
        <shortName evidence="1">SDH</shortName>
        <ecNumber evidence="1">1.1.1.25</ecNumber>
    </recommendedName>
</protein>
<gene>
    <name evidence="1" type="primary">aroE</name>
    <name type="ordered locus">SPs0577</name>
</gene>
<comment type="function">
    <text evidence="1">Involved in the biosynthesis of the chorismate, which leads to the biosynthesis of aromatic amino acids. Catalyzes the reversible NADPH linked reduction of 3-dehydroshikimate (DHSA) to yield shikimate (SA).</text>
</comment>
<comment type="catalytic activity">
    <reaction evidence="1">
        <text>shikimate + NADP(+) = 3-dehydroshikimate + NADPH + H(+)</text>
        <dbReference type="Rhea" id="RHEA:17737"/>
        <dbReference type="ChEBI" id="CHEBI:15378"/>
        <dbReference type="ChEBI" id="CHEBI:16630"/>
        <dbReference type="ChEBI" id="CHEBI:36208"/>
        <dbReference type="ChEBI" id="CHEBI:57783"/>
        <dbReference type="ChEBI" id="CHEBI:58349"/>
        <dbReference type="EC" id="1.1.1.25"/>
    </reaction>
</comment>
<comment type="pathway">
    <text evidence="1">Metabolic intermediate biosynthesis; chorismate biosynthesis; chorismate from D-erythrose 4-phosphate and phosphoenolpyruvate: step 4/7.</text>
</comment>
<comment type="subunit">
    <text evidence="1">Homodimer.</text>
</comment>
<comment type="similarity">
    <text evidence="1">Belongs to the shikimate dehydrogenase family.</text>
</comment>
<dbReference type="EC" id="1.1.1.25" evidence="1"/>
<dbReference type="EMBL" id="BA000034">
    <property type="protein sequence ID" value="BAC63672.1"/>
    <property type="molecule type" value="Genomic_DNA"/>
</dbReference>
<dbReference type="RefSeq" id="WP_002983735.1">
    <property type="nucleotide sequence ID" value="NC_004606.1"/>
</dbReference>
<dbReference type="SMR" id="P0CZ77"/>
<dbReference type="KEGG" id="sps:SPs0577"/>
<dbReference type="HOGENOM" id="CLU_044063_4_4_9"/>
<dbReference type="UniPathway" id="UPA00053">
    <property type="reaction ID" value="UER00087"/>
</dbReference>
<dbReference type="GO" id="GO:0050661">
    <property type="term" value="F:NADP binding"/>
    <property type="evidence" value="ECO:0007669"/>
    <property type="project" value="InterPro"/>
</dbReference>
<dbReference type="GO" id="GO:0004764">
    <property type="term" value="F:shikimate 3-dehydrogenase (NADP+) activity"/>
    <property type="evidence" value="ECO:0007669"/>
    <property type="project" value="UniProtKB-UniRule"/>
</dbReference>
<dbReference type="GO" id="GO:0008652">
    <property type="term" value="P:amino acid biosynthetic process"/>
    <property type="evidence" value="ECO:0007669"/>
    <property type="project" value="UniProtKB-KW"/>
</dbReference>
<dbReference type="GO" id="GO:0009073">
    <property type="term" value="P:aromatic amino acid family biosynthetic process"/>
    <property type="evidence" value="ECO:0007669"/>
    <property type="project" value="UniProtKB-KW"/>
</dbReference>
<dbReference type="GO" id="GO:0009423">
    <property type="term" value="P:chorismate biosynthetic process"/>
    <property type="evidence" value="ECO:0007669"/>
    <property type="project" value="UniProtKB-UniRule"/>
</dbReference>
<dbReference type="GO" id="GO:0019632">
    <property type="term" value="P:shikimate metabolic process"/>
    <property type="evidence" value="ECO:0007669"/>
    <property type="project" value="InterPro"/>
</dbReference>
<dbReference type="CDD" id="cd01065">
    <property type="entry name" value="NAD_bind_Shikimate_DH"/>
    <property type="match status" value="1"/>
</dbReference>
<dbReference type="FunFam" id="3.40.50.10860:FF:000004">
    <property type="entry name" value="Quinate/shikimate dehydrogenase"/>
    <property type="match status" value="1"/>
</dbReference>
<dbReference type="FunFam" id="3.40.50.720:FF:000086">
    <property type="entry name" value="Quinate/shikimate dehydrogenase"/>
    <property type="match status" value="1"/>
</dbReference>
<dbReference type="Gene3D" id="3.40.50.10860">
    <property type="entry name" value="Leucine Dehydrogenase, chain A, domain 1"/>
    <property type="match status" value="1"/>
</dbReference>
<dbReference type="Gene3D" id="3.40.50.720">
    <property type="entry name" value="NAD(P)-binding Rossmann-like Domain"/>
    <property type="match status" value="1"/>
</dbReference>
<dbReference type="HAMAP" id="MF_00222">
    <property type="entry name" value="Shikimate_DH_AroE"/>
    <property type="match status" value="1"/>
</dbReference>
<dbReference type="InterPro" id="IPR046346">
    <property type="entry name" value="Aminoacid_DH-like_N_sf"/>
</dbReference>
<dbReference type="InterPro" id="IPR036291">
    <property type="entry name" value="NAD(P)-bd_dom_sf"/>
</dbReference>
<dbReference type="InterPro" id="IPR041121">
    <property type="entry name" value="SDH_C"/>
</dbReference>
<dbReference type="InterPro" id="IPR011342">
    <property type="entry name" value="Shikimate_DH"/>
</dbReference>
<dbReference type="InterPro" id="IPR013708">
    <property type="entry name" value="Shikimate_DH-bd_N"/>
</dbReference>
<dbReference type="InterPro" id="IPR022893">
    <property type="entry name" value="Shikimate_DH_fam"/>
</dbReference>
<dbReference type="NCBIfam" id="TIGR00507">
    <property type="entry name" value="aroE"/>
    <property type="match status" value="1"/>
</dbReference>
<dbReference type="NCBIfam" id="NF001319">
    <property type="entry name" value="PRK00258.3-3"/>
    <property type="match status" value="1"/>
</dbReference>
<dbReference type="PANTHER" id="PTHR21089:SF1">
    <property type="entry name" value="BIFUNCTIONAL 3-DEHYDROQUINATE DEHYDRATASE_SHIKIMATE DEHYDROGENASE, CHLOROPLASTIC"/>
    <property type="match status" value="1"/>
</dbReference>
<dbReference type="PANTHER" id="PTHR21089">
    <property type="entry name" value="SHIKIMATE DEHYDROGENASE"/>
    <property type="match status" value="1"/>
</dbReference>
<dbReference type="Pfam" id="PF18317">
    <property type="entry name" value="SDH_C"/>
    <property type="match status" value="1"/>
</dbReference>
<dbReference type="Pfam" id="PF08501">
    <property type="entry name" value="Shikimate_dh_N"/>
    <property type="match status" value="1"/>
</dbReference>
<dbReference type="SUPFAM" id="SSF53223">
    <property type="entry name" value="Aminoacid dehydrogenase-like, N-terminal domain"/>
    <property type="match status" value="1"/>
</dbReference>
<dbReference type="SUPFAM" id="SSF51735">
    <property type="entry name" value="NAD(P)-binding Rossmann-fold domains"/>
    <property type="match status" value="1"/>
</dbReference>
<sequence length="292" mass="31276">MSERLSGHTLLVSLLATPIRHSLSPKMHNEAYAKLGLDYAYLAFEVGTEQLADAVQGIRALGIRGSNVSMPNKEAILPLLDDLSPAAELVGAVNTVVNKDGKGHLVGHITDGIGALRALADEGVSVKNKIITLAGVGGAGKAIAVQLAFDGAKEVRLFNRQATRLSSVQKLVTKLNQLTRTKVTLQDLEDQTAFKEAIRESHLFIDATSVGMKPLENLSLITDPELIRPDLVVFDIVYSPAETKLLAFARQHGAQKVINGLGMVLYQGAEAFKLITGQDMPVDAIKPLLGDE</sequence>
<feature type="chain" id="PRO_0000411276" description="Shikimate dehydrogenase (NADP(+))">
    <location>
        <begin position="1"/>
        <end position="292"/>
    </location>
</feature>
<feature type="active site" description="Proton acceptor" evidence="1">
    <location>
        <position position="73"/>
    </location>
</feature>
<feature type="binding site" evidence="1">
    <location>
        <begin position="22"/>
        <end position="24"/>
    </location>
    <ligand>
        <name>shikimate</name>
        <dbReference type="ChEBI" id="CHEBI:36208"/>
    </ligand>
</feature>
<feature type="binding site" evidence="1">
    <location>
        <position position="69"/>
    </location>
    <ligand>
        <name>shikimate</name>
        <dbReference type="ChEBI" id="CHEBI:36208"/>
    </ligand>
</feature>
<feature type="binding site" evidence="1">
    <location>
        <position position="94"/>
    </location>
    <ligand>
        <name>shikimate</name>
        <dbReference type="ChEBI" id="CHEBI:36208"/>
    </ligand>
</feature>
<feature type="binding site" evidence="1">
    <location>
        <position position="111"/>
    </location>
    <ligand>
        <name>shikimate</name>
        <dbReference type="ChEBI" id="CHEBI:36208"/>
    </ligand>
</feature>
<feature type="binding site" evidence="1">
    <location>
        <begin position="135"/>
        <end position="139"/>
    </location>
    <ligand>
        <name>NADP(+)</name>
        <dbReference type="ChEBI" id="CHEBI:58349"/>
    </ligand>
</feature>
<feature type="binding site" evidence="1">
    <location>
        <position position="236"/>
    </location>
    <ligand>
        <name>NADP(+)</name>
        <dbReference type="ChEBI" id="CHEBI:58349"/>
    </ligand>
</feature>
<feature type="binding site" evidence="1">
    <location>
        <position position="238"/>
    </location>
    <ligand>
        <name>shikimate</name>
        <dbReference type="ChEBI" id="CHEBI:36208"/>
    </ligand>
</feature>
<feature type="binding site" evidence="1">
    <location>
        <position position="260"/>
    </location>
    <ligand>
        <name>NADP(+)</name>
        <dbReference type="ChEBI" id="CHEBI:58349"/>
    </ligand>
</feature>
<proteinExistence type="inferred from homology"/>
<organism>
    <name type="scientific">Streptococcus pyogenes serotype M3 (strain SSI-1)</name>
    <dbReference type="NCBI Taxonomy" id="193567"/>
    <lineage>
        <taxon>Bacteria</taxon>
        <taxon>Bacillati</taxon>
        <taxon>Bacillota</taxon>
        <taxon>Bacilli</taxon>
        <taxon>Lactobacillales</taxon>
        <taxon>Streptococcaceae</taxon>
        <taxon>Streptococcus</taxon>
    </lineage>
</organism>
<evidence type="ECO:0000255" key="1">
    <source>
        <dbReference type="HAMAP-Rule" id="MF_00222"/>
    </source>
</evidence>
<reference key="1">
    <citation type="journal article" date="2003" name="Genome Res.">
        <title>Genome sequence of an M3 strain of Streptococcus pyogenes reveals a large-scale genomic rearrangement in invasive strains and new insights into phage evolution.</title>
        <authorList>
            <person name="Nakagawa I."/>
            <person name="Kurokawa K."/>
            <person name="Yamashita A."/>
            <person name="Nakata M."/>
            <person name="Tomiyasu Y."/>
            <person name="Okahashi N."/>
            <person name="Kawabata S."/>
            <person name="Yamazaki K."/>
            <person name="Shiba T."/>
            <person name="Yasunaga T."/>
            <person name="Hayashi H."/>
            <person name="Hattori M."/>
            <person name="Hamada S."/>
        </authorList>
    </citation>
    <scope>NUCLEOTIDE SEQUENCE [LARGE SCALE GENOMIC DNA]</scope>
    <source>
        <strain>SSI-1</strain>
    </source>
</reference>
<name>AROE_STRPQ</name>
<accession>P0CZ77</accession>
<accession>P63598</accession>
<accession>Q99YQ9</accession>